<feature type="chain" id="PRO_0000334544" description="Ankyrin repeat domain-containing protein 36A">
    <location>
        <begin position="1"/>
        <end position="1915"/>
    </location>
</feature>
<feature type="repeat" description="ANK 1" evidence="1">
    <location>
        <begin position="31"/>
        <end position="60"/>
    </location>
</feature>
<feature type="repeat" description="ANK 2" evidence="1">
    <location>
        <begin position="64"/>
        <end position="93"/>
    </location>
</feature>
<feature type="repeat" description="ANK 3" evidence="1">
    <location>
        <begin position="97"/>
        <end position="126"/>
    </location>
</feature>
<feature type="repeat" description="ANK 4" evidence="1">
    <location>
        <begin position="130"/>
        <end position="159"/>
    </location>
</feature>
<feature type="repeat" description="ANK 5" evidence="1">
    <location>
        <begin position="163"/>
        <end position="192"/>
    </location>
</feature>
<feature type="repeat" description="ANK 6" evidence="1">
    <location>
        <begin position="196"/>
        <end position="225"/>
    </location>
</feature>
<feature type="region of interest" description="Disordered" evidence="2">
    <location>
        <begin position="261"/>
        <end position="331"/>
    </location>
</feature>
<feature type="region of interest" description="Disordered" evidence="2">
    <location>
        <begin position="470"/>
        <end position="619"/>
    </location>
</feature>
<feature type="region of interest" description="Disordered" evidence="2">
    <location>
        <begin position="639"/>
        <end position="663"/>
    </location>
</feature>
<feature type="region of interest" description="Disordered" evidence="2">
    <location>
        <begin position="676"/>
        <end position="1203"/>
    </location>
</feature>
<feature type="region of interest" description="Disordered" evidence="2">
    <location>
        <begin position="1285"/>
        <end position="1304"/>
    </location>
</feature>
<feature type="region of interest" description="Disordered" evidence="2">
    <location>
        <begin position="1489"/>
        <end position="1508"/>
    </location>
</feature>
<feature type="coiled-coil region" evidence="1">
    <location>
        <begin position="1383"/>
        <end position="1466"/>
    </location>
</feature>
<feature type="coiled-coil region" evidence="1">
    <location>
        <begin position="1504"/>
        <end position="1531"/>
    </location>
</feature>
<feature type="coiled-coil region" evidence="1">
    <location>
        <begin position="1573"/>
        <end position="1614"/>
    </location>
</feature>
<feature type="coiled-coil region" evidence="1">
    <location>
        <begin position="1727"/>
        <end position="1814"/>
    </location>
</feature>
<feature type="compositionally biased region" description="Polar residues" evidence="2">
    <location>
        <begin position="262"/>
        <end position="272"/>
    </location>
</feature>
<feature type="compositionally biased region" description="Polar residues" evidence="2">
    <location>
        <begin position="297"/>
        <end position="306"/>
    </location>
</feature>
<feature type="compositionally biased region" description="Low complexity" evidence="2">
    <location>
        <begin position="505"/>
        <end position="521"/>
    </location>
</feature>
<feature type="compositionally biased region" description="Basic and acidic residues" evidence="2">
    <location>
        <begin position="551"/>
        <end position="562"/>
    </location>
</feature>
<feature type="compositionally biased region" description="Basic and acidic residues" evidence="2">
    <location>
        <begin position="585"/>
        <end position="596"/>
    </location>
</feature>
<feature type="compositionally biased region" description="Polar residues" evidence="2">
    <location>
        <begin position="597"/>
        <end position="619"/>
    </location>
</feature>
<feature type="compositionally biased region" description="Polar residues" evidence="2">
    <location>
        <begin position="645"/>
        <end position="657"/>
    </location>
</feature>
<feature type="compositionally biased region" description="Basic and acidic residues" evidence="2">
    <location>
        <begin position="806"/>
        <end position="815"/>
    </location>
</feature>
<feature type="compositionally biased region" description="Basic and acidic residues" evidence="2">
    <location>
        <begin position="874"/>
        <end position="883"/>
    </location>
</feature>
<feature type="compositionally biased region" description="Basic and acidic residues" evidence="2">
    <location>
        <begin position="931"/>
        <end position="951"/>
    </location>
</feature>
<feature type="compositionally biased region" description="Basic and acidic residues" evidence="2">
    <location>
        <begin position="976"/>
        <end position="985"/>
    </location>
</feature>
<feature type="compositionally biased region" description="Basic and acidic residues" evidence="2">
    <location>
        <begin position="1044"/>
        <end position="1053"/>
    </location>
</feature>
<feature type="compositionally biased region" description="Basic and acidic residues" evidence="2">
    <location>
        <begin position="1100"/>
        <end position="1121"/>
    </location>
</feature>
<feature type="compositionally biased region" description="Basic and acidic residues" evidence="2">
    <location>
        <begin position="1134"/>
        <end position="1152"/>
    </location>
</feature>
<feature type="compositionally biased region" description="Polar residues" evidence="2">
    <location>
        <begin position="1175"/>
        <end position="1196"/>
    </location>
</feature>
<feature type="splice variant" id="VSP_039656" description="In isoform 2." evidence="3 6 7">
    <location>
        <begin position="1"/>
        <end position="1149"/>
    </location>
</feature>
<feature type="splice variant" id="VSP_039657" description="In isoform 3." evidence="4 6">
    <original>C</original>
    <variation>V</variation>
    <location>
        <position position="163"/>
    </location>
</feature>
<feature type="splice variant" id="VSP_039658" description="In isoform 3." evidence="4 6">
    <location>
        <begin position="164"/>
        <end position="1915"/>
    </location>
</feature>
<feature type="splice variant" id="VSP_039659" description="In isoform 4." evidence="5">
    <original>EYQPLLF</original>
    <variation>LLRNNQP</variation>
    <location>
        <begin position="164"/>
        <end position="170"/>
    </location>
</feature>
<feature type="splice variant" id="VSP_039660" description="In isoform 4." evidence="5">
    <location>
        <begin position="171"/>
        <end position="1915"/>
    </location>
</feature>
<feature type="splice variant" id="VSP_039661" description="In isoform 2." evidence="3 6 7">
    <original>DEQISGTVSC</original>
    <variation>MYPFCFSVSS</variation>
    <location>
        <begin position="1150"/>
        <end position="1159"/>
    </location>
</feature>
<feature type="splice variant" id="VSP_039663" description="In isoform 2." evidence="3 6 7">
    <location>
        <position position="1293"/>
    </location>
</feature>
<feature type="splice variant" id="VSP_039664" description="In isoform 2." evidence="3 6 7">
    <original>FQEIQDQLTATIR</original>
    <variation>VCMQLCTPTTVNL</variation>
    <location>
        <begin position="1854"/>
        <end position="1866"/>
    </location>
</feature>
<feature type="splice variant" id="VSP_039665" description="In isoform 2." evidence="3 6 7">
    <location>
        <begin position="1867"/>
        <end position="1915"/>
    </location>
</feature>
<feature type="sequence conflict" description="In Ref. 1; BAB13467 and 5; AAI46836." evidence="8" ref="1 5">
    <original>V</original>
    <variation>L</variation>
    <location>
        <position position="1452"/>
    </location>
</feature>
<feature type="sequence conflict" description="In Ref. 1; BAB13467 and 5; AAI46836." evidence="8" ref="1 5">
    <original>N</original>
    <variation>T</variation>
    <location>
        <position position="1785"/>
    </location>
</feature>
<keyword id="KW-0025">Alternative splicing</keyword>
<keyword id="KW-0040">ANK repeat</keyword>
<keyword id="KW-0175">Coiled coil</keyword>
<keyword id="KW-1267">Proteomics identification</keyword>
<keyword id="KW-1185">Reference proteome</keyword>
<keyword id="KW-0677">Repeat</keyword>
<name>AN36A_HUMAN</name>
<evidence type="ECO:0000255" key="1"/>
<evidence type="ECO:0000256" key="2">
    <source>
        <dbReference type="SAM" id="MobiDB-lite"/>
    </source>
</evidence>
<evidence type="ECO:0000303" key="3">
    <source>
    </source>
</evidence>
<evidence type="ECO:0000303" key="4">
    <source>
    </source>
</evidence>
<evidence type="ECO:0000303" key="5">
    <source>
    </source>
</evidence>
<evidence type="ECO:0000303" key="6">
    <source>
    </source>
</evidence>
<evidence type="ECO:0000303" key="7">
    <source ref="6"/>
</evidence>
<evidence type="ECO:0000305" key="8"/>
<proteinExistence type="evidence at protein level"/>
<dbReference type="EMBL" id="AB046861">
    <property type="protein sequence ID" value="BAB13467.1"/>
    <property type="status" value="ALT_INIT"/>
    <property type="molecule type" value="mRNA"/>
</dbReference>
<dbReference type="EMBL" id="AY358571">
    <property type="protein sequence ID" value="AAQ88934.1"/>
    <property type="status" value="ALT_INIT"/>
    <property type="molecule type" value="mRNA"/>
</dbReference>
<dbReference type="EMBL" id="AK304740">
    <property type="protein sequence ID" value="BAG65500.1"/>
    <property type="molecule type" value="mRNA"/>
</dbReference>
<dbReference type="EMBL" id="AK316541">
    <property type="protein sequence ID" value="BAH14912.1"/>
    <property type="molecule type" value="mRNA"/>
</dbReference>
<dbReference type="EMBL" id="AC018892">
    <property type="protein sequence ID" value="AAY14642.1"/>
    <property type="molecule type" value="Genomic_DNA"/>
</dbReference>
<dbReference type="EMBL" id="AC160020">
    <property type="status" value="NOT_ANNOTATED_CDS"/>
    <property type="molecule type" value="Genomic_DNA"/>
</dbReference>
<dbReference type="EMBL" id="BC046186">
    <property type="protein sequence ID" value="AAH46186.1"/>
    <property type="molecule type" value="mRNA"/>
</dbReference>
<dbReference type="EMBL" id="BC146835">
    <property type="protein sequence ID" value="AAI46836.1"/>
    <property type="molecule type" value="mRNA"/>
</dbReference>
<dbReference type="EMBL" id="AF543495">
    <property type="protein sequence ID" value="AAN40505.1"/>
    <property type="molecule type" value="mRNA"/>
</dbReference>
<dbReference type="CCDS" id="CCDS92815.1">
    <molecule id="A6QL64-1"/>
</dbReference>
<dbReference type="RefSeq" id="NP_001341516.1">
    <molecule id="A6QL64-1"/>
    <property type="nucleotide sequence ID" value="NM_001354587.1"/>
</dbReference>
<dbReference type="RefSeq" id="NP_940957.3">
    <molecule id="A6QL64-4"/>
    <property type="nucleotide sequence ID" value="NM_198555.4"/>
</dbReference>
<dbReference type="RefSeq" id="XP_006712577.1">
    <molecule id="A6QL64-1"/>
    <property type="nucleotide sequence ID" value="XM_006712514.4"/>
</dbReference>
<dbReference type="RefSeq" id="XP_011509432.1">
    <property type="nucleotide sequence ID" value="XM_011511130.1"/>
</dbReference>
<dbReference type="RefSeq" id="XP_016859498.1">
    <molecule id="A6QL64-1"/>
    <property type="nucleotide sequence ID" value="XM_017004009.2"/>
</dbReference>
<dbReference type="RefSeq" id="XP_047300183.1">
    <molecule id="A6QL64-1"/>
    <property type="nucleotide sequence ID" value="XM_047444227.1"/>
</dbReference>
<dbReference type="RefSeq" id="XP_054188893.1">
    <molecule id="A6QL64-1"/>
    <property type="nucleotide sequence ID" value="XM_054332918.1"/>
</dbReference>
<dbReference type="RefSeq" id="XP_054188894.1">
    <molecule id="A6QL64-1"/>
    <property type="nucleotide sequence ID" value="XM_054332919.1"/>
</dbReference>
<dbReference type="RefSeq" id="XP_054188895.1">
    <molecule id="A6QL64-1"/>
    <property type="nucleotide sequence ID" value="XM_054332920.1"/>
</dbReference>
<dbReference type="SMR" id="A6QL64"/>
<dbReference type="BioGRID" id="131962">
    <property type="interactions" value="32"/>
</dbReference>
<dbReference type="FunCoup" id="A6QL64">
    <property type="interactions" value="152"/>
</dbReference>
<dbReference type="IntAct" id="A6QL64">
    <property type="interactions" value="9"/>
</dbReference>
<dbReference type="STRING" id="9606.ENSP00000498611"/>
<dbReference type="GlyGen" id="A6QL64">
    <property type="glycosylation" value="2 sites, 1 O-linked glycan (2 sites)"/>
</dbReference>
<dbReference type="iPTMnet" id="A6QL64"/>
<dbReference type="PhosphoSitePlus" id="A6QL64"/>
<dbReference type="BioMuta" id="ANKRD36"/>
<dbReference type="jPOST" id="A6QL64"/>
<dbReference type="MassIVE" id="A6QL64"/>
<dbReference type="PaxDb" id="9606-ENSP00000391950"/>
<dbReference type="PeptideAtlas" id="A6QL64"/>
<dbReference type="ProteomicsDB" id="1746">
    <molecule id="A6QL64-1"/>
</dbReference>
<dbReference type="ProteomicsDB" id="1747">
    <molecule id="A6QL64-3"/>
</dbReference>
<dbReference type="Antibodypedia" id="71228">
    <property type="antibodies" value="19 antibodies from 10 providers"/>
</dbReference>
<dbReference type="DNASU" id="375248"/>
<dbReference type="Ensembl" id="ENST00000420699.9">
    <molecule id="A6QL64-1"/>
    <property type="protein sequence ID" value="ENSP00000391950.4"/>
    <property type="gene ID" value="ENSG00000135976.21"/>
</dbReference>
<dbReference type="Ensembl" id="ENST00000461153.7">
    <molecule id="A6QL64-1"/>
    <property type="protein sequence ID" value="ENSP00000419530.3"/>
    <property type="gene ID" value="ENSG00000135976.21"/>
</dbReference>
<dbReference type="Ensembl" id="ENST00000652721.1">
    <molecule id="A6QL64-1"/>
    <property type="protein sequence ID" value="ENSP00000498611.1"/>
    <property type="gene ID" value="ENSG00000135976.21"/>
</dbReference>
<dbReference type="Ensembl" id="ENST00000708051.1">
    <molecule id="A6QL64-1"/>
    <property type="protein sequence ID" value="ENSP00000517080.1"/>
    <property type="gene ID" value="ENSG00000291582.1"/>
</dbReference>
<dbReference type="Ensembl" id="ENST00000708052.1">
    <molecule id="A6QL64-1"/>
    <property type="protein sequence ID" value="ENSP00000517081.1"/>
    <property type="gene ID" value="ENSG00000291582.1"/>
</dbReference>
<dbReference type="Ensembl" id="ENST00000708053.1">
    <molecule id="A6QL64-1"/>
    <property type="protein sequence ID" value="ENSP00000517082.1"/>
    <property type="gene ID" value="ENSG00000291582.1"/>
</dbReference>
<dbReference type="GeneID" id="375248"/>
<dbReference type="MANE-Select" id="ENST00000420699.9">
    <property type="protein sequence ID" value="ENSP00000391950.4"/>
    <property type="RefSeq nucleotide sequence ID" value="NM_001354587.1"/>
    <property type="RefSeq protein sequence ID" value="NP_001341516.1"/>
</dbReference>
<dbReference type="UCSC" id="uc010yva.3">
    <molecule id="A6QL64-1"/>
    <property type="organism name" value="human"/>
</dbReference>
<dbReference type="AGR" id="HGNC:24079"/>
<dbReference type="CTD" id="375248"/>
<dbReference type="DisGeNET" id="375248"/>
<dbReference type="GeneCards" id="ANKRD36"/>
<dbReference type="HGNC" id="HGNC:24079">
    <property type="gene designation" value="ANKRD36"/>
</dbReference>
<dbReference type="HPA" id="ENSG00000135976">
    <property type="expression patterns" value="Tissue enhanced (bone marrow, retina)"/>
</dbReference>
<dbReference type="MIM" id="620262">
    <property type="type" value="gene"/>
</dbReference>
<dbReference type="neXtProt" id="NX_A6QL64"/>
<dbReference type="OpenTargets" id="ENSG00000135976"/>
<dbReference type="VEuPathDB" id="HostDB:ENSG00000135976"/>
<dbReference type="eggNOG" id="KOG0504">
    <property type="taxonomic scope" value="Eukaryota"/>
</dbReference>
<dbReference type="GeneTree" id="ENSGT00940000163264"/>
<dbReference type="HOGENOM" id="CLU_001111_2_1_1"/>
<dbReference type="InParanoid" id="A6QL64"/>
<dbReference type="OrthoDB" id="9538085at2759"/>
<dbReference type="PAN-GO" id="A6QL64">
    <property type="GO annotations" value="0 GO annotations based on evolutionary models"/>
</dbReference>
<dbReference type="PhylomeDB" id="A6QL64"/>
<dbReference type="TreeFam" id="TF333496"/>
<dbReference type="PathwayCommons" id="A6QL64"/>
<dbReference type="SignaLink" id="A6QL64"/>
<dbReference type="BioGRID-ORCS" id="375248">
    <property type="hits" value="228 hits in 1093 CRISPR screens"/>
</dbReference>
<dbReference type="ChiTaRS" id="ANKRD36">
    <property type="organism name" value="human"/>
</dbReference>
<dbReference type="GenomeRNAi" id="375248"/>
<dbReference type="Pharos" id="A6QL64">
    <property type="development level" value="Tdark"/>
</dbReference>
<dbReference type="PRO" id="PR:A6QL64"/>
<dbReference type="Proteomes" id="UP000005640">
    <property type="component" value="Chromosome 2"/>
</dbReference>
<dbReference type="RNAct" id="A6QL64">
    <property type="molecule type" value="protein"/>
</dbReference>
<dbReference type="Bgee" id="ENSG00000135976">
    <property type="expression patterns" value="Expressed in corpus callosum and 103 other cell types or tissues"/>
</dbReference>
<dbReference type="ExpressionAtlas" id="A6QL64">
    <property type="expression patterns" value="baseline and differential"/>
</dbReference>
<dbReference type="Gene3D" id="1.25.40.20">
    <property type="entry name" value="Ankyrin repeat-containing domain"/>
    <property type="match status" value="1"/>
</dbReference>
<dbReference type="InterPro" id="IPR050657">
    <property type="entry name" value="Ankyrin_repeat_domain"/>
</dbReference>
<dbReference type="InterPro" id="IPR002110">
    <property type="entry name" value="Ankyrin_rpt"/>
</dbReference>
<dbReference type="InterPro" id="IPR036770">
    <property type="entry name" value="Ankyrin_rpt-contain_sf"/>
</dbReference>
<dbReference type="InterPro" id="IPR039497">
    <property type="entry name" value="CC144C-like_CC_dom"/>
</dbReference>
<dbReference type="PANTHER" id="PTHR24147">
    <property type="entry name" value="ANKYRIN REPEAT DOMAIN 36-RELATED"/>
    <property type="match status" value="1"/>
</dbReference>
<dbReference type="PANTHER" id="PTHR24147:SF50">
    <property type="entry name" value="ANKYRIN REPEAT DOMAIN-CONTAINING PROTEIN 36A-RELATED"/>
    <property type="match status" value="1"/>
</dbReference>
<dbReference type="Pfam" id="PF12796">
    <property type="entry name" value="Ank_2"/>
    <property type="match status" value="2"/>
</dbReference>
<dbReference type="Pfam" id="PF14915">
    <property type="entry name" value="CCDC144C"/>
    <property type="match status" value="2"/>
</dbReference>
<dbReference type="SMART" id="SM00248">
    <property type="entry name" value="ANK"/>
    <property type="match status" value="6"/>
</dbReference>
<dbReference type="SUPFAM" id="SSF48403">
    <property type="entry name" value="Ankyrin repeat"/>
    <property type="match status" value="1"/>
</dbReference>
<dbReference type="PROSITE" id="PS50297">
    <property type="entry name" value="ANK_REP_REGION"/>
    <property type="match status" value="1"/>
</dbReference>
<dbReference type="PROSITE" id="PS50088">
    <property type="entry name" value="ANK_REPEAT"/>
    <property type="match status" value="5"/>
</dbReference>
<accession>A6QL64</accession>
<accession>A0A494C0M0</accession>
<accession>B4E3I8</accession>
<accession>Q6UX02</accession>
<accession>Q86X62</accession>
<accession>Q9HCD1</accession>
<reference key="1">
    <citation type="journal article" date="2000" name="DNA Res.">
        <title>Prediction of the coding sequences of unidentified human genes. XVIII. The complete sequences of 100 new cDNA clones from brain which code for large proteins in vitro.</title>
        <authorList>
            <person name="Nagase T."/>
            <person name="Kikuno R."/>
            <person name="Nakayama M."/>
            <person name="Hirosawa M."/>
            <person name="Ohara O."/>
        </authorList>
    </citation>
    <scope>NUCLEOTIDE SEQUENCE [LARGE SCALE MRNA] (ISOFORM 2)</scope>
</reference>
<reference key="2">
    <citation type="journal article" date="2003" name="Genome Res.">
        <title>The secreted protein discovery initiative (SPDI), a large-scale effort to identify novel human secreted and transmembrane proteins: a bioinformatics assessment.</title>
        <authorList>
            <person name="Clark H.F."/>
            <person name="Gurney A.L."/>
            <person name="Abaya E."/>
            <person name="Baker K."/>
            <person name="Baldwin D.T."/>
            <person name="Brush J."/>
            <person name="Chen J."/>
            <person name="Chow B."/>
            <person name="Chui C."/>
            <person name="Crowley C."/>
            <person name="Currell B."/>
            <person name="Deuel B."/>
            <person name="Dowd P."/>
            <person name="Eaton D."/>
            <person name="Foster J.S."/>
            <person name="Grimaldi C."/>
            <person name="Gu Q."/>
            <person name="Hass P.E."/>
            <person name="Heldens S."/>
            <person name="Huang A."/>
            <person name="Kim H.S."/>
            <person name="Klimowski L."/>
            <person name="Jin Y."/>
            <person name="Johnson S."/>
            <person name="Lee J."/>
            <person name="Lewis L."/>
            <person name="Liao D."/>
            <person name="Mark M.R."/>
            <person name="Robbie E."/>
            <person name="Sanchez C."/>
            <person name="Schoenfeld J."/>
            <person name="Seshagiri S."/>
            <person name="Simmons L."/>
            <person name="Singh J."/>
            <person name="Smith V."/>
            <person name="Stinson J."/>
            <person name="Vagts A."/>
            <person name="Vandlen R.L."/>
            <person name="Watanabe C."/>
            <person name="Wieand D."/>
            <person name="Woods K."/>
            <person name="Xie M.-H."/>
            <person name="Yansura D.G."/>
            <person name="Yi S."/>
            <person name="Yu G."/>
            <person name="Yuan J."/>
            <person name="Zhang M."/>
            <person name="Zhang Z."/>
            <person name="Goddard A.D."/>
            <person name="Wood W.I."/>
            <person name="Godowski P.J."/>
            <person name="Gray A.M."/>
        </authorList>
    </citation>
    <scope>NUCLEOTIDE SEQUENCE [LARGE SCALE MRNA] (ISOFORM 3)</scope>
</reference>
<reference key="3">
    <citation type="journal article" date="2004" name="Nat. Genet.">
        <title>Complete sequencing and characterization of 21,243 full-length human cDNAs.</title>
        <authorList>
            <person name="Ota T."/>
            <person name="Suzuki Y."/>
            <person name="Nishikawa T."/>
            <person name="Otsuki T."/>
            <person name="Sugiyama T."/>
            <person name="Irie R."/>
            <person name="Wakamatsu A."/>
            <person name="Hayashi K."/>
            <person name="Sato H."/>
            <person name="Nagai K."/>
            <person name="Kimura K."/>
            <person name="Makita H."/>
            <person name="Sekine M."/>
            <person name="Obayashi M."/>
            <person name="Nishi T."/>
            <person name="Shibahara T."/>
            <person name="Tanaka T."/>
            <person name="Ishii S."/>
            <person name="Yamamoto J."/>
            <person name="Saito K."/>
            <person name="Kawai Y."/>
            <person name="Isono Y."/>
            <person name="Nakamura Y."/>
            <person name="Nagahari K."/>
            <person name="Murakami K."/>
            <person name="Yasuda T."/>
            <person name="Iwayanagi T."/>
            <person name="Wagatsuma M."/>
            <person name="Shiratori A."/>
            <person name="Sudo H."/>
            <person name="Hosoiri T."/>
            <person name="Kaku Y."/>
            <person name="Kodaira H."/>
            <person name="Kondo H."/>
            <person name="Sugawara M."/>
            <person name="Takahashi M."/>
            <person name="Kanda K."/>
            <person name="Yokoi T."/>
            <person name="Furuya T."/>
            <person name="Kikkawa E."/>
            <person name="Omura Y."/>
            <person name="Abe K."/>
            <person name="Kamihara K."/>
            <person name="Katsuta N."/>
            <person name="Sato K."/>
            <person name="Tanikawa M."/>
            <person name="Yamazaki M."/>
            <person name="Ninomiya K."/>
            <person name="Ishibashi T."/>
            <person name="Yamashita H."/>
            <person name="Murakawa K."/>
            <person name="Fujimori K."/>
            <person name="Tanai H."/>
            <person name="Kimata M."/>
            <person name="Watanabe M."/>
            <person name="Hiraoka S."/>
            <person name="Chiba Y."/>
            <person name="Ishida S."/>
            <person name="Ono Y."/>
            <person name="Takiguchi S."/>
            <person name="Watanabe S."/>
            <person name="Yosida M."/>
            <person name="Hotuta T."/>
            <person name="Kusano J."/>
            <person name="Kanehori K."/>
            <person name="Takahashi-Fujii A."/>
            <person name="Hara H."/>
            <person name="Tanase T.-O."/>
            <person name="Nomura Y."/>
            <person name="Togiya S."/>
            <person name="Komai F."/>
            <person name="Hara R."/>
            <person name="Takeuchi K."/>
            <person name="Arita M."/>
            <person name="Imose N."/>
            <person name="Musashino K."/>
            <person name="Yuuki H."/>
            <person name="Oshima A."/>
            <person name="Sasaki N."/>
            <person name="Aotsuka S."/>
            <person name="Yoshikawa Y."/>
            <person name="Matsunawa H."/>
            <person name="Ichihara T."/>
            <person name="Shiohata N."/>
            <person name="Sano S."/>
            <person name="Moriya S."/>
            <person name="Momiyama H."/>
            <person name="Satoh N."/>
            <person name="Takami S."/>
            <person name="Terashima Y."/>
            <person name="Suzuki O."/>
            <person name="Nakagawa S."/>
            <person name="Senoh A."/>
            <person name="Mizoguchi H."/>
            <person name="Goto Y."/>
            <person name="Shimizu F."/>
            <person name="Wakebe H."/>
            <person name="Hishigaki H."/>
            <person name="Watanabe T."/>
            <person name="Sugiyama A."/>
            <person name="Takemoto M."/>
            <person name="Kawakami B."/>
            <person name="Yamazaki M."/>
            <person name="Watanabe K."/>
            <person name="Kumagai A."/>
            <person name="Itakura S."/>
            <person name="Fukuzumi Y."/>
            <person name="Fujimori Y."/>
            <person name="Komiyama M."/>
            <person name="Tashiro H."/>
            <person name="Tanigami A."/>
            <person name="Fujiwara T."/>
            <person name="Ono T."/>
            <person name="Yamada K."/>
            <person name="Fujii Y."/>
            <person name="Ozaki K."/>
            <person name="Hirao M."/>
            <person name="Ohmori Y."/>
            <person name="Kawabata A."/>
            <person name="Hikiji T."/>
            <person name="Kobatake N."/>
            <person name="Inagaki H."/>
            <person name="Ikema Y."/>
            <person name="Okamoto S."/>
            <person name="Okitani R."/>
            <person name="Kawakami T."/>
            <person name="Noguchi S."/>
            <person name="Itoh T."/>
            <person name="Shigeta K."/>
            <person name="Senba T."/>
            <person name="Matsumura K."/>
            <person name="Nakajima Y."/>
            <person name="Mizuno T."/>
            <person name="Morinaga M."/>
            <person name="Sasaki M."/>
            <person name="Togashi T."/>
            <person name="Oyama M."/>
            <person name="Hata H."/>
            <person name="Watanabe M."/>
            <person name="Komatsu T."/>
            <person name="Mizushima-Sugano J."/>
            <person name="Satoh T."/>
            <person name="Shirai Y."/>
            <person name="Takahashi Y."/>
            <person name="Nakagawa K."/>
            <person name="Okumura K."/>
            <person name="Nagase T."/>
            <person name="Nomura N."/>
            <person name="Kikuchi H."/>
            <person name="Masuho Y."/>
            <person name="Yamashita R."/>
            <person name="Nakai K."/>
            <person name="Yada T."/>
            <person name="Nakamura Y."/>
            <person name="Ohara O."/>
            <person name="Isogai T."/>
            <person name="Sugano S."/>
        </authorList>
    </citation>
    <scope>NUCLEOTIDE SEQUENCE [LARGE SCALE MRNA] (ISOFORM 4)</scope>
    <source>
        <tissue>Uterus</tissue>
    </source>
</reference>
<reference key="4">
    <citation type="journal article" date="2005" name="Nature">
        <title>Generation and annotation of the DNA sequences of human chromosomes 2 and 4.</title>
        <authorList>
            <person name="Hillier L.W."/>
            <person name="Graves T.A."/>
            <person name="Fulton R.S."/>
            <person name="Fulton L.A."/>
            <person name="Pepin K.H."/>
            <person name="Minx P."/>
            <person name="Wagner-McPherson C."/>
            <person name="Layman D."/>
            <person name="Wylie K."/>
            <person name="Sekhon M."/>
            <person name="Becker M.C."/>
            <person name="Fewell G.A."/>
            <person name="Delehaunty K.D."/>
            <person name="Miner T.L."/>
            <person name="Nash W.E."/>
            <person name="Kremitzki C."/>
            <person name="Oddy L."/>
            <person name="Du H."/>
            <person name="Sun H."/>
            <person name="Bradshaw-Cordum H."/>
            <person name="Ali J."/>
            <person name="Carter J."/>
            <person name="Cordes M."/>
            <person name="Harris A."/>
            <person name="Isak A."/>
            <person name="van Brunt A."/>
            <person name="Nguyen C."/>
            <person name="Du F."/>
            <person name="Courtney L."/>
            <person name="Kalicki J."/>
            <person name="Ozersky P."/>
            <person name="Abbott S."/>
            <person name="Armstrong J."/>
            <person name="Belter E.A."/>
            <person name="Caruso L."/>
            <person name="Cedroni M."/>
            <person name="Cotton M."/>
            <person name="Davidson T."/>
            <person name="Desai A."/>
            <person name="Elliott G."/>
            <person name="Erb T."/>
            <person name="Fronick C."/>
            <person name="Gaige T."/>
            <person name="Haakenson W."/>
            <person name="Haglund K."/>
            <person name="Holmes A."/>
            <person name="Harkins R."/>
            <person name="Kim K."/>
            <person name="Kruchowski S.S."/>
            <person name="Strong C.M."/>
            <person name="Grewal N."/>
            <person name="Goyea E."/>
            <person name="Hou S."/>
            <person name="Levy A."/>
            <person name="Martinka S."/>
            <person name="Mead K."/>
            <person name="McLellan M.D."/>
            <person name="Meyer R."/>
            <person name="Randall-Maher J."/>
            <person name="Tomlinson C."/>
            <person name="Dauphin-Kohlberg S."/>
            <person name="Kozlowicz-Reilly A."/>
            <person name="Shah N."/>
            <person name="Swearengen-Shahid S."/>
            <person name="Snider J."/>
            <person name="Strong J.T."/>
            <person name="Thompson J."/>
            <person name="Yoakum M."/>
            <person name="Leonard S."/>
            <person name="Pearman C."/>
            <person name="Trani L."/>
            <person name="Radionenko M."/>
            <person name="Waligorski J.E."/>
            <person name="Wang C."/>
            <person name="Rock S.M."/>
            <person name="Tin-Wollam A.-M."/>
            <person name="Maupin R."/>
            <person name="Latreille P."/>
            <person name="Wendl M.C."/>
            <person name="Yang S.-P."/>
            <person name="Pohl C."/>
            <person name="Wallis J.W."/>
            <person name="Spieth J."/>
            <person name="Bieri T.A."/>
            <person name="Berkowicz N."/>
            <person name="Nelson J.O."/>
            <person name="Osborne J."/>
            <person name="Ding L."/>
            <person name="Meyer R."/>
            <person name="Sabo A."/>
            <person name="Shotland Y."/>
            <person name="Sinha P."/>
            <person name="Wohldmann P.E."/>
            <person name="Cook L.L."/>
            <person name="Hickenbotham M.T."/>
            <person name="Eldred J."/>
            <person name="Williams D."/>
            <person name="Jones T.A."/>
            <person name="She X."/>
            <person name="Ciccarelli F.D."/>
            <person name="Izaurralde E."/>
            <person name="Taylor J."/>
            <person name="Schmutz J."/>
            <person name="Myers R.M."/>
            <person name="Cox D.R."/>
            <person name="Huang X."/>
            <person name="McPherson J.D."/>
            <person name="Mardis E.R."/>
            <person name="Clifton S.W."/>
            <person name="Warren W.C."/>
            <person name="Chinwalla A.T."/>
            <person name="Eddy S.R."/>
            <person name="Marra M.A."/>
            <person name="Ovcharenko I."/>
            <person name="Furey T.S."/>
            <person name="Miller W."/>
            <person name="Eichler E.E."/>
            <person name="Bork P."/>
            <person name="Suyama M."/>
            <person name="Torrents D."/>
            <person name="Waterston R.H."/>
            <person name="Wilson R.K."/>
        </authorList>
    </citation>
    <scope>NUCLEOTIDE SEQUENCE [LARGE SCALE GENOMIC DNA]</scope>
</reference>
<reference key="5">
    <citation type="journal article" date="2004" name="Genome Res.">
        <title>The status, quality, and expansion of the NIH full-length cDNA project: the Mammalian Gene Collection (MGC).</title>
        <authorList>
            <consortium name="The MGC Project Team"/>
        </authorList>
    </citation>
    <scope>NUCLEOTIDE SEQUENCE [LARGE SCALE MRNA] (ISOFORMS 2 AND 3)</scope>
    <source>
        <tissue>Eye</tissue>
    </source>
</reference>
<reference key="6">
    <citation type="submission" date="2002-09" db="EMBL/GenBank/DDBJ databases">
        <title>Study of the immune profile in metastatic melanoma patients immunized with anti-idiotypic antibody by SEREX analysis.</title>
        <authorList>
            <person name="Bruno R."/>
            <person name="d'Orlando O."/>
            <person name="Altomonte A."/>
            <person name="Lamaj E."/>
            <person name="Maio M."/>
            <person name="Pucillo C."/>
        </authorList>
    </citation>
    <scope>NUCLEOTIDE SEQUENCE [MRNA] OF 1414-1915 (ISOFORM 2)</scope>
</reference>
<sequence length="1915" mass="214500">MEDGKRERWPTLMERLCSDGFAFPQYPIKPYHLKRIHRAVLHGNLEKLKYLLLTYYDANKRDRKERTALHLACATGQPEMVHLLVSRRCELNLCDREDRTPLIKAVQLRQEACATLLLQNGANPNITDFFGRTALHYAVYNEDTSMIEKLLSHGTNIEECSKCEYQPLLFAVSRRKVKMVEFLLKKKANVNAIDYLGRSALIHAVTLGEKDIVILLLQHNIDVLSRDAFRKIAGDYAIEAKNRVIFDLIYEYERKRYEDLPINSNPVSSQKQPALKATSGKEDSISNIATEIKDGQKSGTVSSQKQPALKDTSDKDDSVSNTATEIKDEQKSGTVLPAVEQCLNRSLYRPDAVAQPVTENEFSLESEIISKLYIPKRKIISPRSIKDVLPPVEEAVDRCLYLLDRFAQPVTKDKFALESENISEPYFTNRRTISQQSAENLDAACGIDKTENGNMFEDQNVDKEGKALPATGQKANVSPEQPPLFTHTVKDRDHISTRFLGGMDSLTSSEESSERPPLSTLTLKEADPSSKAAMRRKDSPPPGKVSSQKQPAEKATSDDKDSVSNIATEIKEGPISGTVSSQKQPAEKATSDEKDSVSNIATEIKKGQQSGTVSPQKQSAWKVIFKKKVSLLNIATRIMGGGKSGTVSSQKQPASKATSDKTDSALNIATEIKDGLQCGTVSSQKQPALKATTDEEDSVSNIATEIKDGEKSGTVSSQKQPALKATTDEEDSVSNIATEIKDGEKSGTVSSQKQPALKATTDEKDSVSNIATEIKDGEKSGTVSSQKPPALTATSDEEGSVLSIARENKDGEKSRTVSSRKKPALKATSDEKDSFSNITRGKKDGEISRKVSSQKPPTLKGTSDEEDSVLGIARENKDGEKSRTVSSEKPPGLKASSAEKDSVLNIARGKKDGEKTKRVSSRKKPSLEATSDEKDSFSNITREKKDGEISRKVSSQKPPALKGTSDEEDSVLGIARENKDGEKSRTVSSEKPPGLKATSDEKDSVLNIARGKKDGEKTRTVSSQKPPTLKATSDEEDSVLSIARENKDGEKSRTVSSEKPSGLKATSAEKDSVLNIARGKKYGEKTKRVSSRKKPALKATSDEKDSVLYIAREKKDGEKSRTVSSPKQPALKAICDKEDSVPNMATEKKDEQISGTVSCQKQPALKATSDKKDSVSNIPTEIKDGQQSGTVSSQKQPAWKATSVKKDSVSNIATEIKDGQIRGTVSPQKQSAQKVIFKKKVSLLNIATRITGGWKSGTEYPENLPTLKATIENKNSVLNTATKMKDVQTSTPAEQDLEMASEGEQKRLEEYENNQPQVKNQIHSRDDLDDIIQSSQTVSEDGDSLCCNCKNVILLIDQHEMKCKDCVHLLKIKNTFCLWKRLIKLKDNHCEQLRVKIRKLKNKASVLQKRISEKEEIKSQLKHEILELEKELCSLRFAIQQEKKKRRNVEEVHQKVREKLRITEEQYRIEADVTKPIKPALKSAEVELKTGGNNSNQVSETDEKEDLLHENRLMQDEIARLRLEKDTIKNQNLEKKYLKDFEIVKRKHEDLQKALKRNGETLAKTIACYSGQLAALTDENTTLRSKLEKQRESRQRLETEMQSYHCRLNAARCDHDQSHSSKRDQELAFQGTVDKCRHLQENLNSHVLILSLQLSKAESKSRVLKTELHYTGEALKEKALVFEHVQSELKQKQSQMKDIEKMYKSGYNTMEKCIEKQERFCQLKKQNMLLQQQLDDARNKADNQEKAILNIQARCDARVQNLQAECRKHRLLLEEDNKMLVNELNHSKEKECQYEKEKAEREVAVRQLQQKRDDVLNKGSATKALLDASSRHCTYLENGMQDSRKKLDQMRSQFQEIQDQLTATIRCTKEMEGDTQKLEVEHVMMRKIIKKQDDQIERLEKILQHSSLMLQVFES</sequence>
<gene>
    <name type="primary">ANKRD36</name>
    <name type="synonym">ANKRD36A</name>
    <name type="synonym">KIAA1641</name>
    <name type="ORF">UNQ2430/PRO499</name>
</gene>
<protein>
    <recommendedName>
        <fullName>Ankyrin repeat domain-containing protein 36A</fullName>
    </recommendedName>
</protein>
<comment type="alternative products">
    <event type="alternative splicing"/>
    <isoform>
        <id>A6QL64-1</id>
        <name>1</name>
        <sequence type="displayed"/>
    </isoform>
    <isoform>
        <id>A6QL64-3</id>
        <name>2</name>
        <sequence type="described" ref="VSP_039656 VSP_039661 VSP_039663 VSP_039664 VSP_039665"/>
    </isoform>
    <isoform>
        <id>A6QL64-4</id>
        <id>Q6UX02-1</id>
        <name>3</name>
        <sequence type="described" ref="VSP_039657 VSP_039658"/>
    </isoform>
    <isoform>
        <id>A6QL64-5</id>
        <id>Q6UX02-2</id>
        <name>4</name>
        <sequence type="described" ref="VSP_039659 VSP_039660"/>
    </isoform>
</comment>
<comment type="similarity">
    <text evidence="8">Belongs to the ANKRD36 family.</text>
</comment>
<comment type="sequence caution" evidence="8">
    <conflict type="erroneous initiation">
        <sequence resource="EMBL-CDS" id="AAQ88934"/>
    </conflict>
    <text>Truncated N-terminus.</text>
</comment>
<comment type="sequence caution" evidence="8">
    <conflict type="erroneous initiation">
        <sequence resource="EMBL-CDS" id="BAB13467"/>
    </conflict>
    <text>Extended N-terminus.</text>
</comment>
<organism>
    <name type="scientific">Homo sapiens</name>
    <name type="common">Human</name>
    <dbReference type="NCBI Taxonomy" id="9606"/>
    <lineage>
        <taxon>Eukaryota</taxon>
        <taxon>Metazoa</taxon>
        <taxon>Chordata</taxon>
        <taxon>Craniata</taxon>
        <taxon>Vertebrata</taxon>
        <taxon>Euteleostomi</taxon>
        <taxon>Mammalia</taxon>
        <taxon>Eutheria</taxon>
        <taxon>Euarchontoglires</taxon>
        <taxon>Primates</taxon>
        <taxon>Haplorrhini</taxon>
        <taxon>Catarrhini</taxon>
        <taxon>Hominidae</taxon>
        <taxon>Homo</taxon>
    </lineage>
</organism>